<reference key="1">
    <citation type="journal article" date="2002" name="Nucleic Acids Res.">
        <title>Genome sequence of Oceanobacillus iheyensis isolated from the Iheya Ridge and its unexpected adaptive capabilities to extreme environments.</title>
        <authorList>
            <person name="Takami H."/>
            <person name="Takaki Y."/>
            <person name="Uchiyama I."/>
        </authorList>
    </citation>
    <scope>NUCLEOTIDE SEQUENCE [LARGE SCALE GENOMIC DNA]</scope>
    <source>
        <strain>DSM 14371 / CIP 107618 / JCM 11309 / KCTC 3954 / HTE831</strain>
    </source>
</reference>
<proteinExistence type="inferred from homology"/>
<protein>
    <recommendedName>
        <fullName evidence="1">Isoprenyl transferase</fullName>
        <ecNumber evidence="1">2.5.1.-</ecNumber>
    </recommendedName>
</protein>
<comment type="function">
    <text evidence="1">Catalyzes the condensation of isopentenyl diphosphate (IPP) with allylic pyrophosphates generating different type of terpenoids.</text>
</comment>
<comment type="cofactor">
    <cofactor evidence="1">
        <name>Mg(2+)</name>
        <dbReference type="ChEBI" id="CHEBI:18420"/>
    </cofactor>
    <text evidence="1">Binds 2 magnesium ions per subunit.</text>
</comment>
<comment type="subunit">
    <text evidence="1">Homodimer.</text>
</comment>
<comment type="similarity">
    <text evidence="1">Belongs to the UPP synthase family.</text>
</comment>
<feature type="chain" id="PRO_0000123646" description="Isoprenyl transferase">
    <location>
        <begin position="1"/>
        <end position="252"/>
    </location>
</feature>
<feature type="active site" evidence="1">
    <location>
        <position position="32"/>
    </location>
</feature>
<feature type="active site" description="Proton acceptor" evidence="1">
    <location>
        <position position="80"/>
    </location>
</feature>
<feature type="binding site" evidence="1">
    <location>
        <position position="32"/>
    </location>
    <ligand>
        <name>Mg(2+)</name>
        <dbReference type="ChEBI" id="CHEBI:18420"/>
    </ligand>
</feature>
<feature type="binding site" evidence="1">
    <location>
        <begin position="33"/>
        <end position="36"/>
    </location>
    <ligand>
        <name>substrate</name>
    </ligand>
</feature>
<feature type="binding site" evidence="1">
    <location>
        <position position="37"/>
    </location>
    <ligand>
        <name>substrate</name>
    </ligand>
</feature>
<feature type="binding site" evidence="1">
    <location>
        <position position="45"/>
    </location>
    <ligand>
        <name>substrate</name>
    </ligand>
</feature>
<feature type="binding site" evidence="1">
    <location>
        <position position="49"/>
    </location>
    <ligand>
        <name>substrate</name>
    </ligand>
</feature>
<feature type="binding site" evidence="1">
    <location>
        <begin position="77"/>
        <end position="79"/>
    </location>
    <ligand>
        <name>substrate</name>
    </ligand>
</feature>
<feature type="binding site" evidence="1">
    <location>
        <position position="81"/>
    </location>
    <ligand>
        <name>substrate</name>
    </ligand>
</feature>
<feature type="binding site" evidence="1">
    <location>
        <position position="83"/>
    </location>
    <ligand>
        <name>substrate</name>
    </ligand>
</feature>
<feature type="binding site" evidence="1">
    <location>
        <position position="200"/>
    </location>
    <ligand>
        <name>substrate</name>
    </ligand>
</feature>
<feature type="binding site" evidence="1">
    <location>
        <begin position="206"/>
        <end position="208"/>
    </location>
    <ligand>
        <name>substrate</name>
    </ligand>
</feature>
<feature type="binding site" evidence="1">
    <location>
        <position position="219"/>
    </location>
    <ligand>
        <name>Mg(2+)</name>
        <dbReference type="ChEBI" id="CHEBI:18420"/>
    </ligand>
</feature>
<dbReference type="EC" id="2.5.1.-" evidence="1"/>
<dbReference type="EMBL" id="BA000028">
    <property type="protein sequence ID" value="BAC13546.1"/>
    <property type="molecule type" value="Genomic_DNA"/>
</dbReference>
<dbReference type="RefSeq" id="WP_011065990.1">
    <property type="nucleotide sequence ID" value="NC_004193.1"/>
</dbReference>
<dbReference type="SMR" id="Q8EQU9"/>
<dbReference type="STRING" id="221109.gene:10733830"/>
<dbReference type="KEGG" id="oih:OB1590"/>
<dbReference type="eggNOG" id="COG0020">
    <property type="taxonomic scope" value="Bacteria"/>
</dbReference>
<dbReference type="HOGENOM" id="CLU_038505_1_1_9"/>
<dbReference type="OrthoDB" id="4191603at2"/>
<dbReference type="PhylomeDB" id="Q8EQU9"/>
<dbReference type="Proteomes" id="UP000000822">
    <property type="component" value="Chromosome"/>
</dbReference>
<dbReference type="GO" id="GO:0005829">
    <property type="term" value="C:cytosol"/>
    <property type="evidence" value="ECO:0007669"/>
    <property type="project" value="TreeGrafter"/>
</dbReference>
<dbReference type="GO" id="GO:0008834">
    <property type="term" value="F:ditrans,polycis-undecaprenyl-diphosphate synthase [(2E,6E)-farnesyl-diphosphate specific] activity"/>
    <property type="evidence" value="ECO:0007669"/>
    <property type="project" value="TreeGrafter"/>
</dbReference>
<dbReference type="GO" id="GO:0000287">
    <property type="term" value="F:magnesium ion binding"/>
    <property type="evidence" value="ECO:0007669"/>
    <property type="project" value="UniProtKB-UniRule"/>
</dbReference>
<dbReference type="GO" id="GO:0030145">
    <property type="term" value="F:manganese ion binding"/>
    <property type="evidence" value="ECO:0007669"/>
    <property type="project" value="TreeGrafter"/>
</dbReference>
<dbReference type="GO" id="GO:0016094">
    <property type="term" value="P:polyprenol biosynthetic process"/>
    <property type="evidence" value="ECO:0007669"/>
    <property type="project" value="TreeGrafter"/>
</dbReference>
<dbReference type="CDD" id="cd00475">
    <property type="entry name" value="Cis_IPPS"/>
    <property type="match status" value="1"/>
</dbReference>
<dbReference type="FunFam" id="3.40.1180.10:FF:000001">
    <property type="entry name" value="(2E,6E)-farnesyl-diphosphate-specific ditrans,polycis-undecaprenyl-diphosphate synthase"/>
    <property type="match status" value="1"/>
</dbReference>
<dbReference type="Gene3D" id="3.40.1180.10">
    <property type="entry name" value="Decaprenyl diphosphate synthase-like"/>
    <property type="match status" value="1"/>
</dbReference>
<dbReference type="HAMAP" id="MF_01139">
    <property type="entry name" value="ISPT"/>
    <property type="match status" value="1"/>
</dbReference>
<dbReference type="InterPro" id="IPR001441">
    <property type="entry name" value="UPP_synth-like"/>
</dbReference>
<dbReference type="InterPro" id="IPR018520">
    <property type="entry name" value="UPP_synth-like_CS"/>
</dbReference>
<dbReference type="InterPro" id="IPR036424">
    <property type="entry name" value="UPP_synth-like_sf"/>
</dbReference>
<dbReference type="NCBIfam" id="NF011405">
    <property type="entry name" value="PRK14830.1"/>
    <property type="match status" value="1"/>
</dbReference>
<dbReference type="NCBIfam" id="TIGR00055">
    <property type="entry name" value="uppS"/>
    <property type="match status" value="1"/>
</dbReference>
<dbReference type="PANTHER" id="PTHR10291:SF0">
    <property type="entry name" value="DEHYDRODOLICHYL DIPHOSPHATE SYNTHASE 2"/>
    <property type="match status" value="1"/>
</dbReference>
<dbReference type="PANTHER" id="PTHR10291">
    <property type="entry name" value="DEHYDRODOLICHYL DIPHOSPHATE SYNTHASE FAMILY MEMBER"/>
    <property type="match status" value="1"/>
</dbReference>
<dbReference type="Pfam" id="PF01255">
    <property type="entry name" value="Prenyltransf"/>
    <property type="match status" value="1"/>
</dbReference>
<dbReference type="SUPFAM" id="SSF64005">
    <property type="entry name" value="Undecaprenyl diphosphate synthase"/>
    <property type="match status" value="1"/>
</dbReference>
<dbReference type="PROSITE" id="PS01066">
    <property type="entry name" value="UPP_SYNTHASE"/>
    <property type="match status" value="1"/>
</dbReference>
<evidence type="ECO:0000255" key="1">
    <source>
        <dbReference type="HAMAP-Rule" id="MF_01139"/>
    </source>
</evidence>
<organism>
    <name type="scientific">Oceanobacillus iheyensis (strain DSM 14371 / CIP 107618 / JCM 11309 / KCTC 3954 / HTE831)</name>
    <dbReference type="NCBI Taxonomy" id="221109"/>
    <lineage>
        <taxon>Bacteria</taxon>
        <taxon>Bacillati</taxon>
        <taxon>Bacillota</taxon>
        <taxon>Bacilli</taxon>
        <taxon>Bacillales</taxon>
        <taxon>Bacillaceae</taxon>
        <taxon>Oceanobacillus</taxon>
    </lineage>
</organism>
<keyword id="KW-0460">Magnesium</keyword>
<keyword id="KW-0479">Metal-binding</keyword>
<keyword id="KW-1185">Reference proteome</keyword>
<keyword id="KW-0808">Transferase</keyword>
<gene>
    <name evidence="1" type="primary">uppS</name>
    <name type="ordered locus">OB1590</name>
</gene>
<accession>Q8EQU9</accession>
<name>ISPT_OCEIH</name>
<sequence length="252" mass="29388">MSIKIPFLSKQVKETELEDWDNIPSHIAIIMDGNGRWAQKRGLPRIAGHREGVSTVNRIVKTAVNANVKVLTLYTFSTENWKRPKSEVDFILKLPKEFLHVYLPGLIENNVRVQTIGDFNAVPKHTQDAIEYAMEKTKDNDGLVLNFALNYGSRYEIIHAVKQIVQKTKASELDVEQLDESYFEKHLFTNGLSDPDLLIRTGGEYRLSNFMLWQLAYTEFWFTEKLWPEFDEDTFHQALMEYQQRKRRYGGI</sequence>